<dbReference type="EC" id="4.2.1.96" evidence="1"/>
<dbReference type="EMBL" id="FM209186">
    <property type="protein sequence ID" value="CAW29200.1"/>
    <property type="molecule type" value="Genomic_DNA"/>
</dbReference>
<dbReference type="RefSeq" id="WP_003085898.1">
    <property type="nucleotide sequence ID" value="NC_011770.1"/>
</dbReference>
<dbReference type="SMR" id="B7UY63"/>
<dbReference type="KEGG" id="pag:PLES_44451"/>
<dbReference type="HOGENOM" id="CLU_081974_2_2_6"/>
<dbReference type="GO" id="GO:0008124">
    <property type="term" value="F:4-alpha-hydroxytetrahydrobiopterin dehydratase activity"/>
    <property type="evidence" value="ECO:0007669"/>
    <property type="project" value="UniProtKB-UniRule"/>
</dbReference>
<dbReference type="GO" id="GO:0006729">
    <property type="term" value="P:tetrahydrobiopterin biosynthetic process"/>
    <property type="evidence" value="ECO:0007669"/>
    <property type="project" value="InterPro"/>
</dbReference>
<dbReference type="CDD" id="cd00913">
    <property type="entry name" value="PCD_DCoH_subfamily_a"/>
    <property type="match status" value="1"/>
</dbReference>
<dbReference type="Gene3D" id="3.30.1360.20">
    <property type="entry name" value="Transcriptional coactivator/pterin dehydratase"/>
    <property type="match status" value="1"/>
</dbReference>
<dbReference type="HAMAP" id="MF_00434">
    <property type="entry name" value="Pterin_4_alpha"/>
    <property type="match status" value="1"/>
</dbReference>
<dbReference type="InterPro" id="IPR036428">
    <property type="entry name" value="PCD_sf"/>
</dbReference>
<dbReference type="InterPro" id="IPR050376">
    <property type="entry name" value="Pterin-4-alpha-carb_dehyd"/>
</dbReference>
<dbReference type="InterPro" id="IPR001533">
    <property type="entry name" value="Pterin_deHydtase"/>
</dbReference>
<dbReference type="NCBIfam" id="NF002016">
    <property type="entry name" value="PRK00823.1-1"/>
    <property type="match status" value="1"/>
</dbReference>
<dbReference type="PANTHER" id="PTHR42805">
    <property type="entry name" value="PTERIN-4-ALPHA-CARBINOLAMINE DEHYDRATASE-RELATED"/>
    <property type="match status" value="1"/>
</dbReference>
<dbReference type="PANTHER" id="PTHR42805:SF1">
    <property type="entry name" value="PTERIN-4-ALPHA-CARBINOLAMINE DEHYDRATASE-RELATED"/>
    <property type="match status" value="1"/>
</dbReference>
<dbReference type="Pfam" id="PF01329">
    <property type="entry name" value="Pterin_4a"/>
    <property type="match status" value="1"/>
</dbReference>
<dbReference type="SUPFAM" id="SSF55248">
    <property type="entry name" value="PCD-like"/>
    <property type="match status" value="1"/>
</dbReference>
<organism>
    <name type="scientific">Pseudomonas aeruginosa (strain LESB58)</name>
    <dbReference type="NCBI Taxonomy" id="557722"/>
    <lineage>
        <taxon>Bacteria</taxon>
        <taxon>Pseudomonadati</taxon>
        <taxon>Pseudomonadota</taxon>
        <taxon>Gammaproteobacteria</taxon>
        <taxon>Pseudomonadales</taxon>
        <taxon>Pseudomonadaceae</taxon>
        <taxon>Pseudomonas</taxon>
    </lineage>
</organism>
<protein>
    <recommendedName>
        <fullName evidence="1">Putative pterin-4-alpha-carbinolamine dehydratase</fullName>
        <shortName evidence="1">PHS</shortName>
        <ecNumber evidence="1">4.2.1.96</ecNumber>
    </recommendedName>
    <alternativeName>
        <fullName evidence="1">4-alpha-hydroxy-tetrahydropterin dehydratase</fullName>
    </alternativeName>
    <alternativeName>
        <fullName evidence="1">Pterin carbinolamine dehydratase</fullName>
        <shortName evidence="1">PCD</shortName>
    </alternativeName>
</protein>
<keyword id="KW-0456">Lyase</keyword>
<evidence type="ECO:0000255" key="1">
    <source>
        <dbReference type="HAMAP-Rule" id="MF_00434"/>
    </source>
</evidence>
<feature type="chain" id="PRO_1000192927" description="Putative pterin-4-alpha-carbinolamine dehydratase">
    <location>
        <begin position="1"/>
        <end position="118"/>
    </location>
</feature>
<reference key="1">
    <citation type="journal article" date="2009" name="Genome Res.">
        <title>Newly introduced genomic prophage islands are critical determinants of in vivo competitiveness in the Liverpool epidemic strain of Pseudomonas aeruginosa.</title>
        <authorList>
            <person name="Winstanley C."/>
            <person name="Langille M.G.I."/>
            <person name="Fothergill J.L."/>
            <person name="Kukavica-Ibrulj I."/>
            <person name="Paradis-Bleau C."/>
            <person name="Sanschagrin F."/>
            <person name="Thomson N.R."/>
            <person name="Winsor G.L."/>
            <person name="Quail M.A."/>
            <person name="Lennard N."/>
            <person name="Bignell A."/>
            <person name="Clarke L."/>
            <person name="Seeger K."/>
            <person name="Saunders D."/>
            <person name="Harris D."/>
            <person name="Parkhill J."/>
            <person name="Hancock R.E.W."/>
            <person name="Brinkman F.S.L."/>
            <person name="Levesque R.C."/>
        </authorList>
    </citation>
    <scope>NUCLEOTIDE SEQUENCE [LARGE SCALE GENOMIC DNA]</scope>
    <source>
        <strain>LESB58</strain>
    </source>
</reference>
<gene>
    <name type="ordered locus">PLES_44451</name>
</gene>
<sequence length="118" mass="13333">MTALTQAHCEACRADAPHVSDEELPVLLRQIPDWNIEVRDGIMQLEKVYLFKNFKHALAFTNAVGEISEAEGHHPGLLTEWGKVTVTWWSHSIKGLHRNDFIMAARTDEVAKTAEGRK</sequence>
<name>PHS_PSEA8</name>
<accession>B7UY63</accession>
<proteinExistence type="inferred from homology"/>
<comment type="catalytic activity">
    <reaction evidence="1">
        <text>(4aS,6R)-4a-hydroxy-L-erythro-5,6,7,8-tetrahydrobiopterin = (6R)-L-erythro-6,7-dihydrobiopterin + H2O</text>
        <dbReference type="Rhea" id="RHEA:11920"/>
        <dbReference type="ChEBI" id="CHEBI:15377"/>
        <dbReference type="ChEBI" id="CHEBI:15642"/>
        <dbReference type="ChEBI" id="CHEBI:43120"/>
        <dbReference type="EC" id="4.2.1.96"/>
    </reaction>
</comment>
<comment type="similarity">
    <text evidence="1">Belongs to the pterin-4-alpha-carbinolamine dehydratase family.</text>
</comment>